<proteinExistence type="inferred from homology"/>
<feature type="chain" id="PRO_1000051666" description="L-threonine 3-dehydrogenase">
    <location>
        <begin position="1"/>
        <end position="341"/>
    </location>
</feature>
<feature type="active site" description="Charge relay system" evidence="1">
    <location>
        <position position="40"/>
    </location>
</feature>
<feature type="active site" description="Charge relay system" evidence="1">
    <location>
        <position position="43"/>
    </location>
</feature>
<feature type="binding site" evidence="1">
    <location>
        <position position="38"/>
    </location>
    <ligand>
        <name>Zn(2+)</name>
        <dbReference type="ChEBI" id="CHEBI:29105"/>
        <label>1</label>
        <note>catalytic</note>
    </ligand>
</feature>
<feature type="binding site" evidence="1">
    <location>
        <position position="63"/>
    </location>
    <ligand>
        <name>Zn(2+)</name>
        <dbReference type="ChEBI" id="CHEBI:29105"/>
        <label>1</label>
        <note>catalytic</note>
    </ligand>
</feature>
<feature type="binding site" evidence="1">
    <location>
        <position position="64"/>
    </location>
    <ligand>
        <name>Zn(2+)</name>
        <dbReference type="ChEBI" id="CHEBI:29105"/>
        <label>1</label>
        <note>catalytic</note>
    </ligand>
</feature>
<feature type="binding site" evidence="1">
    <location>
        <position position="93"/>
    </location>
    <ligand>
        <name>Zn(2+)</name>
        <dbReference type="ChEBI" id="CHEBI:29105"/>
        <label>2</label>
    </ligand>
</feature>
<feature type="binding site" evidence="1">
    <location>
        <position position="96"/>
    </location>
    <ligand>
        <name>Zn(2+)</name>
        <dbReference type="ChEBI" id="CHEBI:29105"/>
        <label>2</label>
    </ligand>
</feature>
<feature type="binding site" evidence="1">
    <location>
        <position position="99"/>
    </location>
    <ligand>
        <name>Zn(2+)</name>
        <dbReference type="ChEBI" id="CHEBI:29105"/>
        <label>2</label>
    </ligand>
</feature>
<feature type="binding site" evidence="1">
    <location>
        <position position="107"/>
    </location>
    <ligand>
        <name>Zn(2+)</name>
        <dbReference type="ChEBI" id="CHEBI:29105"/>
        <label>2</label>
    </ligand>
</feature>
<feature type="binding site" evidence="1">
    <location>
        <position position="175"/>
    </location>
    <ligand>
        <name>NAD(+)</name>
        <dbReference type="ChEBI" id="CHEBI:57540"/>
    </ligand>
</feature>
<feature type="binding site" evidence="1">
    <location>
        <position position="195"/>
    </location>
    <ligand>
        <name>NAD(+)</name>
        <dbReference type="ChEBI" id="CHEBI:57540"/>
    </ligand>
</feature>
<feature type="binding site" evidence="1">
    <location>
        <position position="200"/>
    </location>
    <ligand>
        <name>NAD(+)</name>
        <dbReference type="ChEBI" id="CHEBI:57540"/>
    </ligand>
</feature>
<feature type="binding site" evidence="1">
    <location>
        <begin position="262"/>
        <end position="264"/>
    </location>
    <ligand>
        <name>NAD(+)</name>
        <dbReference type="ChEBI" id="CHEBI:57540"/>
    </ligand>
</feature>
<feature type="binding site" evidence="1">
    <location>
        <begin position="286"/>
        <end position="287"/>
    </location>
    <ligand>
        <name>NAD(+)</name>
        <dbReference type="ChEBI" id="CHEBI:57540"/>
    </ligand>
</feature>
<feature type="site" description="Important for catalytic activity for the proton relay mechanism but does not participate directly in the coordination of zinc atom" evidence="1">
    <location>
        <position position="148"/>
    </location>
</feature>
<accession>Q02BT1</accession>
<gene>
    <name evidence="1" type="primary">tdh</name>
    <name type="ordered locus">Acid_0475</name>
</gene>
<sequence length="341" mass="37375">MKALVKSKSQPGLWLEEIPEPAIGINDVLIRVLRTGICGTDVHIYKWDEWARETIHVPMAIGHEFVGRIEAVGSNVADFFPGDIVSGEGHVVCGRCRNCFAGRRHLCAKTMGVGVNRPGAFAEYIALPMTNIWRHHEGIDLDVAAIFDPFGNAVHTALSFPVLGEDVLITGAGPIGIMAAAVARHAAARYTVITDLNPYRLELAAKLGVTRAVNVREQKLGDVQKELGMTEGFDVGLEMSGNPAGFRDMLANMSHGAKIAMLGIPAGEMAIDWRTVIFNMLTIKGIYGREMYETWYKMSVMLQSGLDISPVITHRYHYTDFEKGFEVMSSGNSGKVILSWD</sequence>
<dbReference type="EC" id="1.1.1.103" evidence="1"/>
<dbReference type="EMBL" id="CP000473">
    <property type="protein sequence ID" value="ABJ81485.1"/>
    <property type="molecule type" value="Genomic_DNA"/>
</dbReference>
<dbReference type="SMR" id="Q02BT1"/>
<dbReference type="FunCoup" id="Q02BT1">
    <property type="interactions" value="230"/>
</dbReference>
<dbReference type="STRING" id="234267.Acid_0475"/>
<dbReference type="KEGG" id="sus:Acid_0475"/>
<dbReference type="eggNOG" id="COG1063">
    <property type="taxonomic scope" value="Bacteria"/>
</dbReference>
<dbReference type="HOGENOM" id="CLU_026673_11_0_0"/>
<dbReference type="InParanoid" id="Q02BT1"/>
<dbReference type="OrthoDB" id="9769198at2"/>
<dbReference type="UniPathway" id="UPA00046">
    <property type="reaction ID" value="UER00505"/>
</dbReference>
<dbReference type="GO" id="GO:0005737">
    <property type="term" value="C:cytoplasm"/>
    <property type="evidence" value="ECO:0007669"/>
    <property type="project" value="UniProtKB-SubCell"/>
</dbReference>
<dbReference type="GO" id="GO:0008743">
    <property type="term" value="F:L-threonine 3-dehydrogenase activity"/>
    <property type="evidence" value="ECO:0007669"/>
    <property type="project" value="UniProtKB-UniRule"/>
</dbReference>
<dbReference type="GO" id="GO:0008270">
    <property type="term" value="F:zinc ion binding"/>
    <property type="evidence" value="ECO:0007669"/>
    <property type="project" value="UniProtKB-UniRule"/>
</dbReference>
<dbReference type="GO" id="GO:0019518">
    <property type="term" value="P:L-threonine catabolic process to glycine"/>
    <property type="evidence" value="ECO:0007669"/>
    <property type="project" value="UniProtKB-UniPathway"/>
</dbReference>
<dbReference type="Gene3D" id="3.90.180.10">
    <property type="entry name" value="Medium-chain alcohol dehydrogenases, catalytic domain"/>
    <property type="match status" value="1"/>
</dbReference>
<dbReference type="Gene3D" id="3.40.50.720">
    <property type="entry name" value="NAD(P)-binding Rossmann-like Domain"/>
    <property type="match status" value="1"/>
</dbReference>
<dbReference type="HAMAP" id="MF_00627">
    <property type="entry name" value="Thr_dehydrog"/>
    <property type="match status" value="1"/>
</dbReference>
<dbReference type="InterPro" id="IPR013149">
    <property type="entry name" value="ADH-like_C"/>
</dbReference>
<dbReference type="InterPro" id="IPR013154">
    <property type="entry name" value="ADH-like_N"/>
</dbReference>
<dbReference type="InterPro" id="IPR002328">
    <property type="entry name" value="ADH_Zn_CS"/>
</dbReference>
<dbReference type="InterPro" id="IPR011032">
    <property type="entry name" value="GroES-like_sf"/>
</dbReference>
<dbReference type="InterPro" id="IPR004627">
    <property type="entry name" value="L-Threonine_3-DHase"/>
</dbReference>
<dbReference type="InterPro" id="IPR036291">
    <property type="entry name" value="NAD(P)-bd_dom_sf"/>
</dbReference>
<dbReference type="InterPro" id="IPR050129">
    <property type="entry name" value="Zn_alcohol_dh"/>
</dbReference>
<dbReference type="NCBIfam" id="NF003808">
    <property type="entry name" value="PRK05396.1"/>
    <property type="match status" value="1"/>
</dbReference>
<dbReference type="NCBIfam" id="TIGR00692">
    <property type="entry name" value="tdh"/>
    <property type="match status" value="1"/>
</dbReference>
<dbReference type="PANTHER" id="PTHR43401">
    <property type="entry name" value="L-THREONINE 3-DEHYDROGENASE"/>
    <property type="match status" value="1"/>
</dbReference>
<dbReference type="PANTHER" id="PTHR43401:SF2">
    <property type="entry name" value="L-THREONINE 3-DEHYDROGENASE"/>
    <property type="match status" value="1"/>
</dbReference>
<dbReference type="Pfam" id="PF08240">
    <property type="entry name" value="ADH_N"/>
    <property type="match status" value="1"/>
</dbReference>
<dbReference type="Pfam" id="PF00107">
    <property type="entry name" value="ADH_zinc_N"/>
    <property type="match status" value="1"/>
</dbReference>
<dbReference type="SUPFAM" id="SSF50129">
    <property type="entry name" value="GroES-like"/>
    <property type="match status" value="1"/>
</dbReference>
<dbReference type="SUPFAM" id="SSF51735">
    <property type="entry name" value="NAD(P)-binding Rossmann-fold domains"/>
    <property type="match status" value="1"/>
</dbReference>
<dbReference type="PROSITE" id="PS00059">
    <property type="entry name" value="ADH_ZINC"/>
    <property type="match status" value="1"/>
</dbReference>
<organism>
    <name type="scientific">Solibacter usitatus (strain Ellin6076)</name>
    <dbReference type="NCBI Taxonomy" id="234267"/>
    <lineage>
        <taxon>Bacteria</taxon>
        <taxon>Pseudomonadati</taxon>
        <taxon>Acidobacteriota</taxon>
        <taxon>Terriglobia</taxon>
        <taxon>Bryobacterales</taxon>
        <taxon>Solibacteraceae</taxon>
        <taxon>Candidatus Solibacter</taxon>
    </lineage>
</organism>
<keyword id="KW-0963">Cytoplasm</keyword>
<keyword id="KW-0479">Metal-binding</keyword>
<keyword id="KW-0520">NAD</keyword>
<keyword id="KW-0560">Oxidoreductase</keyword>
<keyword id="KW-0862">Zinc</keyword>
<reference key="1">
    <citation type="journal article" date="2009" name="Appl. Environ. Microbiol.">
        <title>Three genomes from the phylum Acidobacteria provide insight into the lifestyles of these microorganisms in soils.</title>
        <authorList>
            <person name="Ward N.L."/>
            <person name="Challacombe J.F."/>
            <person name="Janssen P.H."/>
            <person name="Henrissat B."/>
            <person name="Coutinho P.M."/>
            <person name="Wu M."/>
            <person name="Xie G."/>
            <person name="Haft D.H."/>
            <person name="Sait M."/>
            <person name="Badger J."/>
            <person name="Barabote R.D."/>
            <person name="Bradley B."/>
            <person name="Brettin T.S."/>
            <person name="Brinkac L.M."/>
            <person name="Bruce D."/>
            <person name="Creasy T."/>
            <person name="Daugherty S.C."/>
            <person name="Davidsen T.M."/>
            <person name="DeBoy R.T."/>
            <person name="Detter J.C."/>
            <person name="Dodson R.J."/>
            <person name="Durkin A.S."/>
            <person name="Ganapathy A."/>
            <person name="Gwinn-Giglio M."/>
            <person name="Han C.S."/>
            <person name="Khouri H."/>
            <person name="Kiss H."/>
            <person name="Kothari S.P."/>
            <person name="Madupu R."/>
            <person name="Nelson K.E."/>
            <person name="Nelson W.C."/>
            <person name="Paulsen I."/>
            <person name="Penn K."/>
            <person name="Ren Q."/>
            <person name="Rosovitz M.J."/>
            <person name="Selengut J.D."/>
            <person name="Shrivastava S."/>
            <person name="Sullivan S.A."/>
            <person name="Tapia R."/>
            <person name="Thompson L.S."/>
            <person name="Watkins K.L."/>
            <person name="Yang Q."/>
            <person name="Yu C."/>
            <person name="Zafar N."/>
            <person name="Zhou L."/>
            <person name="Kuske C.R."/>
        </authorList>
    </citation>
    <scope>NUCLEOTIDE SEQUENCE [LARGE SCALE GENOMIC DNA]</scope>
    <source>
        <strain>Ellin6076</strain>
    </source>
</reference>
<protein>
    <recommendedName>
        <fullName evidence="1">L-threonine 3-dehydrogenase</fullName>
        <shortName evidence="1">TDH</shortName>
        <ecNumber evidence="1">1.1.1.103</ecNumber>
    </recommendedName>
</protein>
<evidence type="ECO:0000255" key="1">
    <source>
        <dbReference type="HAMAP-Rule" id="MF_00627"/>
    </source>
</evidence>
<name>TDH_SOLUE</name>
<comment type="function">
    <text evidence="1">Catalyzes the NAD(+)-dependent oxidation of L-threonine to 2-amino-3-ketobutyrate.</text>
</comment>
<comment type="catalytic activity">
    <reaction evidence="1">
        <text>L-threonine + NAD(+) = (2S)-2-amino-3-oxobutanoate + NADH + H(+)</text>
        <dbReference type="Rhea" id="RHEA:13161"/>
        <dbReference type="ChEBI" id="CHEBI:15378"/>
        <dbReference type="ChEBI" id="CHEBI:57540"/>
        <dbReference type="ChEBI" id="CHEBI:57926"/>
        <dbReference type="ChEBI" id="CHEBI:57945"/>
        <dbReference type="ChEBI" id="CHEBI:78948"/>
        <dbReference type="EC" id="1.1.1.103"/>
    </reaction>
</comment>
<comment type="cofactor">
    <cofactor evidence="1">
        <name>Zn(2+)</name>
        <dbReference type="ChEBI" id="CHEBI:29105"/>
    </cofactor>
    <text evidence="1">Binds 2 Zn(2+) ions per subunit.</text>
</comment>
<comment type="pathway">
    <text evidence="1">Amino-acid degradation; L-threonine degradation via oxydo-reductase pathway; glycine from L-threonine: step 1/2.</text>
</comment>
<comment type="subunit">
    <text evidence="1">Homotetramer.</text>
</comment>
<comment type="subcellular location">
    <subcellularLocation>
        <location evidence="1">Cytoplasm</location>
    </subcellularLocation>
</comment>
<comment type="similarity">
    <text evidence="1">Belongs to the zinc-containing alcohol dehydrogenase family.</text>
</comment>